<keyword id="KW-0378">Hydrolase</keyword>
<keyword id="KW-0546">Nucleotide metabolism</keyword>
<keyword id="KW-0547">Nucleotide-binding</keyword>
<keyword id="KW-1185">Reference proteome</keyword>
<evidence type="ECO:0000255" key="1">
    <source>
        <dbReference type="HAMAP-Rule" id="MF_00146"/>
    </source>
</evidence>
<comment type="function">
    <text evidence="1">Catalyzes the deamination of dCTP to dUTP.</text>
</comment>
<comment type="catalytic activity">
    <reaction evidence="1">
        <text>dCTP + H2O + H(+) = dUTP + NH4(+)</text>
        <dbReference type="Rhea" id="RHEA:22680"/>
        <dbReference type="ChEBI" id="CHEBI:15377"/>
        <dbReference type="ChEBI" id="CHEBI:15378"/>
        <dbReference type="ChEBI" id="CHEBI:28938"/>
        <dbReference type="ChEBI" id="CHEBI:61481"/>
        <dbReference type="ChEBI" id="CHEBI:61555"/>
        <dbReference type="EC" id="3.5.4.13"/>
    </reaction>
</comment>
<comment type="pathway">
    <text evidence="1">Pyrimidine metabolism; dUMP biosynthesis; dUMP from dCTP (dUTP route): step 1/2.</text>
</comment>
<comment type="subunit">
    <text evidence="1">Homotrimer.</text>
</comment>
<comment type="similarity">
    <text evidence="1">Belongs to the dCTP deaminase family.</text>
</comment>
<gene>
    <name evidence="1" type="primary">dcd</name>
    <name type="ordered locus">BMA0714</name>
</gene>
<protein>
    <recommendedName>
        <fullName evidence="1">dCTP deaminase</fullName>
        <ecNumber evidence="1">3.5.4.13</ecNumber>
    </recommendedName>
    <alternativeName>
        <fullName evidence="1">Deoxycytidine triphosphate deaminase</fullName>
    </alternativeName>
</protein>
<name>DCD_BURMA</name>
<reference key="1">
    <citation type="journal article" date="2004" name="Proc. Natl. Acad. Sci. U.S.A.">
        <title>Structural flexibility in the Burkholderia mallei genome.</title>
        <authorList>
            <person name="Nierman W.C."/>
            <person name="DeShazer D."/>
            <person name="Kim H.S."/>
            <person name="Tettelin H."/>
            <person name="Nelson K.E."/>
            <person name="Feldblyum T.V."/>
            <person name="Ulrich R.L."/>
            <person name="Ronning C.M."/>
            <person name="Brinkac L.M."/>
            <person name="Daugherty S.C."/>
            <person name="Davidsen T.D."/>
            <person name="DeBoy R.T."/>
            <person name="Dimitrov G."/>
            <person name="Dodson R.J."/>
            <person name="Durkin A.S."/>
            <person name="Gwinn M.L."/>
            <person name="Haft D.H."/>
            <person name="Khouri H.M."/>
            <person name="Kolonay J.F."/>
            <person name="Madupu R."/>
            <person name="Mohammoud Y."/>
            <person name="Nelson W.C."/>
            <person name="Radune D."/>
            <person name="Romero C.M."/>
            <person name="Sarria S."/>
            <person name="Selengut J."/>
            <person name="Shamblin C."/>
            <person name="Sullivan S.A."/>
            <person name="White O."/>
            <person name="Yu Y."/>
            <person name="Zafar N."/>
            <person name="Zhou L."/>
            <person name="Fraser C.M."/>
        </authorList>
    </citation>
    <scope>NUCLEOTIDE SEQUENCE [LARGE SCALE GENOMIC DNA]</scope>
    <source>
        <strain>ATCC 23344</strain>
    </source>
</reference>
<accession>Q62LD5</accession>
<proteinExistence type="inferred from homology"/>
<sequence length="189" mass="21312">MSIKSDKWIRRMAEEHKMIEPFVPDQVRAAEDGRKIVSYGTSSYGYDIRCADEFKIFTNINSTIVDPKNFDEGSFVDFKGDVCIIPPNSFALARTVEYFRIPRTVLTVCLGKSTYARCGIIVNVTPFEPEWEGYVTLEFSNTTPLPAKIYANEGVAQVLFFESDEVCDVSYADRGGKYQGQRGVTLPKT</sequence>
<dbReference type="EC" id="3.5.4.13" evidence="1"/>
<dbReference type="EMBL" id="CP000010">
    <property type="protein sequence ID" value="AAU49218.1"/>
    <property type="molecule type" value="Genomic_DNA"/>
</dbReference>
<dbReference type="RefSeq" id="WP_004192666.1">
    <property type="nucleotide sequence ID" value="NC_006348.1"/>
</dbReference>
<dbReference type="RefSeq" id="YP_102484.1">
    <property type="nucleotide sequence ID" value="NC_006348.1"/>
</dbReference>
<dbReference type="SMR" id="Q62LD5"/>
<dbReference type="GeneID" id="93059502"/>
<dbReference type="KEGG" id="bma:BMA0714"/>
<dbReference type="PATRIC" id="fig|243160.12.peg.733"/>
<dbReference type="eggNOG" id="COG0717">
    <property type="taxonomic scope" value="Bacteria"/>
</dbReference>
<dbReference type="HOGENOM" id="CLU_087476_4_0_4"/>
<dbReference type="UniPathway" id="UPA00610">
    <property type="reaction ID" value="UER00665"/>
</dbReference>
<dbReference type="Proteomes" id="UP000006693">
    <property type="component" value="Chromosome 1"/>
</dbReference>
<dbReference type="GO" id="GO:0008829">
    <property type="term" value="F:dCTP deaminase activity"/>
    <property type="evidence" value="ECO:0007669"/>
    <property type="project" value="UniProtKB-UniRule"/>
</dbReference>
<dbReference type="GO" id="GO:0000166">
    <property type="term" value="F:nucleotide binding"/>
    <property type="evidence" value="ECO:0007669"/>
    <property type="project" value="UniProtKB-KW"/>
</dbReference>
<dbReference type="GO" id="GO:0006226">
    <property type="term" value="P:dUMP biosynthetic process"/>
    <property type="evidence" value="ECO:0007669"/>
    <property type="project" value="UniProtKB-UniPathway"/>
</dbReference>
<dbReference type="GO" id="GO:0006229">
    <property type="term" value="P:dUTP biosynthetic process"/>
    <property type="evidence" value="ECO:0007669"/>
    <property type="project" value="UniProtKB-UniRule"/>
</dbReference>
<dbReference type="GO" id="GO:0015949">
    <property type="term" value="P:nucleobase-containing small molecule interconversion"/>
    <property type="evidence" value="ECO:0007669"/>
    <property type="project" value="TreeGrafter"/>
</dbReference>
<dbReference type="CDD" id="cd07557">
    <property type="entry name" value="trimeric_dUTPase"/>
    <property type="match status" value="1"/>
</dbReference>
<dbReference type="FunFam" id="2.70.40.10:FF:000001">
    <property type="entry name" value="dCTP deaminase"/>
    <property type="match status" value="1"/>
</dbReference>
<dbReference type="Gene3D" id="2.70.40.10">
    <property type="match status" value="1"/>
</dbReference>
<dbReference type="HAMAP" id="MF_00146">
    <property type="entry name" value="dCTP_deaminase"/>
    <property type="match status" value="1"/>
</dbReference>
<dbReference type="InterPro" id="IPR011962">
    <property type="entry name" value="dCTP_deaminase"/>
</dbReference>
<dbReference type="InterPro" id="IPR036157">
    <property type="entry name" value="dUTPase-like_sf"/>
</dbReference>
<dbReference type="InterPro" id="IPR033704">
    <property type="entry name" value="dUTPase_trimeric"/>
</dbReference>
<dbReference type="NCBIfam" id="TIGR02274">
    <property type="entry name" value="dCTP_deam"/>
    <property type="match status" value="1"/>
</dbReference>
<dbReference type="PANTHER" id="PTHR42680">
    <property type="entry name" value="DCTP DEAMINASE"/>
    <property type="match status" value="1"/>
</dbReference>
<dbReference type="PANTHER" id="PTHR42680:SF3">
    <property type="entry name" value="DCTP DEAMINASE"/>
    <property type="match status" value="1"/>
</dbReference>
<dbReference type="Pfam" id="PF22769">
    <property type="entry name" value="DCD"/>
    <property type="match status" value="1"/>
</dbReference>
<dbReference type="SUPFAM" id="SSF51283">
    <property type="entry name" value="dUTPase-like"/>
    <property type="match status" value="1"/>
</dbReference>
<organism>
    <name type="scientific">Burkholderia mallei (strain ATCC 23344)</name>
    <dbReference type="NCBI Taxonomy" id="243160"/>
    <lineage>
        <taxon>Bacteria</taxon>
        <taxon>Pseudomonadati</taxon>
        <taxon>Pseudomonadota</taxon>
        <taxon>Betaproteobacteria</taxon>
        <taxon>Burkholderiales</taxon>
        <taxon>Burkholderiaceae</taxon>
        <taxon>Burkholderia</taxon>
        <taxon>pseudomallei group</taxon>
    </lineage>
</organism>
<feature type="chain" id="PRO_1000009689" description="dCTP deaminase">
    <location>
        <begin position="1"/>
        <end position="189"/>
    </location>
</feature>
<feature type="active site" description="Proton donor/acceptor" evidence="1">
    <location>
        <position position="138"/>
    </location>
</feature>
<feature type="binding site" evidence="1">
    <location>
        <begin position="112"/>
        <end position="117"/>
    </location>
    <ligand>
        <name>dCTP</name>
        <dbReference type="ChEBI" id="CHEBI:61481"/>
    </ligand>
</feature>
<feature type="binding site" evidence="1">
    <location>
        <begin position="136"/>
        <end position="138"/>
    </location>
    <ligand>
        <name>dCTP</name>
        <dbReference type="ChEBI" id="CHEBI:61481"/>
    </ligand>
</feature>
<feature type="binding site" evidence="1">
    <location>
        <position position="157"/>
    </location>
    <ligand>
        <name>dCTP</name>
        <dbReference type="ChEBI" id="CHEBI:61481"/>
    </ligand>
</feature>
<feature type="binding site" evidence="1">
    <location>
        <position position="171"/>
    </location>
    <ligand>
        <name>dCTP</name>
        <dbReference type="ChEBI" id="CHEBI:61481"/>
    </ligand>
</feature>
<feature type="binding site" evidence="1">
    <location>
        <position position="181"/>
    </location>
    <ligand>
        <name>dCTP</name>
        <dbReference type="ChEBI" id="CHEBI:61481"/>
    </ligand>
</feature>